<proteinExistence type="inferred from homology"/>
<gene>
    <name type="ORF">SPAC6G10.09</name>
</gene>
<sequence>MVSDMLGGNKRWILFGLLSFLLNCVLVSCSVEDIEKAANDSFLWGPYRPNLYVGIRPKIPDSLMTGLMWSNVDDYARFSKMRHSAEHGDDIGAFGWKHYDVRRGGQQVIDDFLMGIKLETDFVKLPEGNWALRVHGIPLPGAPTDLTTSLFFYAYVEGEGKVGTKVNHANHVYMEGKTPDLGKFRIQTFNRLGEHPVSPASVDLESMVMDKDFFAGFNVKKEGAWRTSELILYLLDTKMKVISDKEGYESLKDLPPAYSTLTLPNLPSEEGLQFIQKVFKGEFMFDIVFNYASSKKISEEMISQAIDKNLQEFEEKFQATFPLKAPYDTEKAHQIFAHTAFSNLFGNVGFFTGDSIVSKNPIELDDEDYEFMQGFESAAGKLAEGTAFHDIERSLFTIVPSRPHFPRGFYWDEGFHLLPVGLWDNDFSLEILKSWFSLVNEDGWVGREQILGEEARSKVPDEFQTQYPDIANPPTLILALKGYIERLQEQQGKLNNRFSGEGEDYSLDDLEYLRSVSISNPEKSVQFLRDLFPLLLRHYEWFRETQKGDFETWERECFSQVEGYRWRGRTYQHCLASGLDDYPRAQPPSTAELHVDLLSWMTSFTRSLHFVAEFLGETEEAEKLAGYENAMLRNLEDNHWDEEVQAYCDSSVDEYDDPINVCHKGYVTLLPMMLGLLPADSGRLTSLLKLIRDENELWSPYGIRSLSMNDVYFGTGENYWRGPIWINMNYLILSSLYQNYINTPGPNQNLARSIYEELRTNVVNNVFENWRQTGIFWEQYDPTTGKGQRTKDFTGWTSLVVNIMSENY</sequence>
<evidence type="ECO:0000250" key="1"/>
<evidence type="ECO:0000250" key="2">
    <source>
        <dbReference type="UniProtKB" id="Q80UM7"/>
    </source>
</evidence>
<evidence type="ECO:0000255" key="3"/>
<evidence type="ECO:0000269" key="4">
    <source>
    </source>
</evidence>
<evidence type="ECO:0000269" key="5">
    <source>
    </source>
</evidence>
<evidence type="ECO:0000305" key="6"/>
<accession>O14255</accession>
<accession>Q9US71</accession>
<organism>
    <name type="scientific">Schizosaccharomyces pombe (strain 972 / ATCC 24843)</name>
    <name type="common">Fission yeast</name>
    <dbReference type="NCBI Taxonomy" id="284812"/>
    <lineage>
        <taxon>Eukaryota</taxon>
        <taxon>Fungi</taxon>
        <taxon>Dikarya</taxon>
        <taxon>Ascomycota</taxon>
        <taxon>Taphrinomycotina</taxon>
        <taxon>Schizosaccharomycetes</taxon>
        <taxon>Schizosaccharomycetales</taxon>
        <taxon>Schizosaccharomycetaceae</taxon>
        <taxon>Schizosaccharomyces</taxon>
    </lineage>
</organism>
<keyword id="KW-0256">Endoplasmic reticulum</keyword>
<keyword id="KW-0325">Glycoprotein</keyword>
<keyword id="KW-0326">Glycosidase</keyword>
<keyword id="KW-0378">Hydrolase</keyword>
<keyword id="KW-0472">Membrane</keyword>
<keyword id="KW-1185">Reference proteome</keyword>
<keyword id="KW-0735">Signal-anchor</keyword>
<keyword id="KW-0812">Transmembrane</keyword>
<keyword id="KW-1133">Transmembrane helix</keyword>
<name>GCS1_SCHPO</name>
<protein>
    <recommendedName>
        <fullName>Probable mannosyl-oligosaccharide glucosidase</fullName>
        <ecNumber>3.2.1.106</ecNumber>
    </recommendedName>
    <alternativeName>
        <fullName>Processing A-glucosidase I</fullName>
    </alternativeName>
</protein>
<reference key="1">
    <citation type="journal article" date="2002" name="Nature">
        <title>The genome sequence of Schizosaccharomyces pombe.</title>
        <authorList>
            <person name="Wood V."/>
            <person name="Gwilliam R."/>
            <person name="Rajandream M.A."/>
            <person name="Lyne M.H."/>
            <person name="Lyne R."/>
            <person name="Stewart A."/>
            <person name="Sgouros J.G."/>
            <person name="Peat N."/>
            <person name="Hayles J."/>
            <person name="Baker S.G."/>
            <person name="Basham D."/>
            <person name="Bowman S."/>
            <person name="Brooks K."/>
            <person name="Brown D."/>
            <person name="Brown S."/>
            <person name="Chillingworth T."/>
            <person name="Churcher C.M."/>
            <person name="Collins M."/>
            <person name="Connor R."/>
            <person name="Cronin A."/>
            <person name="Davis P."/>
            <person name="Feltwell T."/>
            <person name="Fraser A."/>
            <person name="Gentles S."/>
            <person name="Goble A."/>
            <person name="Hamlin N."/>
            <person name="Harris D.E."/>
            <person name="Hidalgo J."/>
            <person name="Hodgson G."/>
            <person name="Holroyd S."/>
            <person name="Hornsby T."/>
            <person name="Howarth S."/>
            <person name="Huckle E.J."/>
            <person name="Hunt S."/>
            <person name="Jagels K."/>
            <person name="James K.D."/>
            <person name="Jones L."/>
            <person name="Jones M."/>
            <person name="Leather S."/>
            <person name="McDonald S."/>
            <person name="McLean J."/>
            <person name="Mooney P."/>
            <person name="Moule S."/>
            <person name="Mungall K.L."/>
            <person name="Murphy L.D."/>
            <person name="Niblett D."/>
            <person name="Odell C."/>
            <person name="Oliver K."/>
            <person name="O'Neil S."/>
            <person name="Pearson D."/>
            <person name="Quail M.A."/>
            <person name="Rabbinowitsch E."/>
            <person name="Rutherford K.M."/>
            <person name="Rutter S."/>
            <person name="Saunders D."/>
            <person name="Seeger K."/>
            <person name="Sharp S."/>
            <person name="Skelton J."/>
            <person name="Simmonds M.N."/>
            <person name="Squares R."/>
            <person name="Squares S."/>
            <person name="Stevens K."/>
            <person name="Taylor K."/>
            <person name="Taylor R.G."/>
            <person name="Tivey A."/>
            <person name="Walsh S.V."/>
            <person name="Warren T."/>
            <person name="Whitehead S."/>
            <person name="Woodward J.R."/>
            <person name="Volckaert G."/>
            <person name="Aert R."/>
            <person name="Robben J."/>
            <person name="Grymonprez B."/>
            <person name="Weltjens I."/>
            <person name="Vanstreels E."/>
            <person name="Rieger M."/>
            <person name="Schaefer M."/>
            <person name="Mueller-Auer S."/>
            <person name="Gabel C."/>
            <person name="Fuchs M."/>
            <person name="Duesterhoeft A."/>
            <person name="Fritzc C."/>
            <person name="Holzer E."/>
            <person name="Moestl D."/>
            <person name="Hilbert H."/>
            <person name="Borzym K."/>
            <person name="Langer I."/>
            <person name="Beck A."/>
            <person name="Lehrach H."/>
            <person name="Reinhardt R."/>
            <person name="Pohl T.M."/>
            <person name="Eger P."/>
            <person name="Zimmermann W."/>
            <person name="Wedler H."/>
            <person name="Wambutt R."/>
            <person name="Purnelle B."/>
            <person name="Goffeau A."/>
            <person name="Cadieu E."/>
            <person name="Dreano S."/>
            <person name="Gloux S."/>
            <person name="Lelaure V."/>
            <person name="Mottier S."/>
            <person name="Galibert F."/>
            <person name="Aves S.J."/>
            <person name="Xiang Z."/>
            <person name="Hunt C."/>
            <person name="Moore K."/>
            <person name="Hurst S.M."/>
            <person name="Lucas M."/>
            <person name="Rochet M."/>
            <person name="Gaillardin C."/>
            <person name="Tallada V.A."/>
            <person name="Garzon A."/>
            <person name="Thode G."/>
            <person name="Daga R.R."/>
            <person name="Cruzado L."/>
            <person name="Jimenez J."/>
            <person name="Sanchez M."/>
            <person name="del Rey F."/>
            <person name="Benito J."/>
            <person name="Dominguez A."/>
            <person name="Revuelta J.L."/>
            <person name="Moreno S."/>
            <person name="Armstrong J."/>
            <person name="Forsburg S.L."/>
            <person name="Cerutti L."/>
            <person name="Lowe T."/>
            <person name="McCombie W.R."/>
            <person name="Paulsen I."/>
            <person name="Potashkin J."/>
            <person name="Shpakovski G.V."/>
            <person name="Ussery D."/>
            <person name="Barrell B.G."/>
            <person name="Nurse P."/>
        </authorList>
    </citation>
    <scope>NUCLEOTIDE SEQUENCE [LARGE SCALE GENOMIC DNA]</scope>
    <source>
        <strain>972 / ATCC 24843</strain>
    </source>
</reference>
<reference key="2">
    <citation type="journal article" date="2000" name="Genes Cells">
        <title>Large-scale screening of intracellular protein localization in living fission yeast cells by the use of a GFP-fusion genomic DNA library.</title>
        <authorList>
            <person name="Ding D.-Q."/>
            <person name="Tomita Y."/>
            <person name="Yamamoto A."/>
            <person name="Chikashige Y."/>
            <person name="Haraguchi T."/>
            <person name="Hiraoka Y."/>
        </authorList>
    </citation>
    <scope>NUCLEOTIDE SEQUENCE [LARGE SCALE GENOMIC DNA] OF 381-530</scope>
    <scope>SUBCELLULAR LOCATION</scope>
    <source>
        <strain>ATCC 38364 / 968</strain>
    </source>
</reference>
<reference key="3">
    <citation type="journal article" date="2006" name="Nat. Biotechnol.">
        <title>ORFeome cloning and global analysis of protein localization in the fission yeast Schizosaccharomyces pombe.</title>
        <authorList>
            <person name="Matsuyama A."/>
            <person name="Arai R."/>
            <person name="Yashiroda Y."/>
            <person name="Shirai A."/>
            <person name="Kamata A."/>
            <person name="Sekido S."/>
            <person name="Kobayashi Y."/>
            <person name="Hashimoto A."/>
            <person name="Hamamoto M."/>
            <person name="Hiraoka Y."/>
            <person name="Horinouchi S."/>
            <person name="Yoshida M."/>
        </authorList>
    </citation>
    <scope>SUBCELLULAR LOCATION [LARGE SCALE ANALYSIS]</scope>
</reference>
<feature type="chain" id="PRO_0000057714" description="Probable mannosyl-oligosaccharide glucosidase">
    <location>
        <begin position="1"/>
        <end position="808"/>
    </location>
</feature>
<feature type="topological domain" description="Cytoplasmic" evidence="3">
    <location>
        <begin position="1"/>
        <end position="11"/>
    </location>
</feature>
<feature type="transmembrane region" description="Helical; Signal-anchor for type II membrane protein" evidence="3">
    <location>
        <begin position="12"/>
        <end position="31"/>
    </location>
</feature>
<feature type="topological domain" description="Lumenal" evidence="3">
    <location>
        <begin position="32"/>
        <end position="808"/>
    </location>
</feature>
<feature type="active site" description="Proton donor" evidence="2">
    <location>
        <position position="580"/>
    </location>
</feature>
<feature type="active site" description="Proton acceptor" evidence="2">
    <location>
        <position position="778"/>
    </location>
</feature>
<feature type="glycosylation site" description="N-linked (GlcNAc...) asparagine" evidence="3">
    <location>
        <position position="39"/>
    </location>
</feature>
<comment type="function">
    <text evidence="1">Cleaves the distal alpha 1,2-linked glucose residue from the Glc(3)Man(9)GlcNAc(2) oligosaccharide precursor highly specifically.</text>
</comment>
<comment type="catalytic activity">
    <reaction>
        <text>N(4)-(alpha-D-Glc-(1-&gt;2)-alpha-D-Glc-(1-&gt;3)-alpha-D-Glc-(1-&gt;3)-alpha-D-Man-(1-&gt;2)-alpha-D-Man-(1-&gt;2)-alpha-D-Man-(1-&gt;3)-[alpha-D-Man-(1-&gt;2)-alpha-D-Man-(1-&gt;3)-[alpha-D-Man-(1-&gt;2)-alpha-D-Man-(1-&gt;6)]-alpha-D-Man-(1-&gt;6)]-beta-D-Man-(1-&gt;4)-beta-D-GlcNAc-(1-&gt;4)-beta-D-GlcNAc)-L-asparaginyl-[protein] + H2O = N(4)-(alpha-D-Glc-(1-&gt;3)-alpha-D-Glc-(1-&gt;3)-alpha-D-Man-(1-&gt;2)-alpha-D-Man-(1-&gt;2)-alpha-D-Man-(1-&gt;3)-[alpha-D-Man-(1-&gt;2)-alpha-D-Man-(1-&gt;3)-[alpha-D-Man-(1-&gt;2)-alpha-D-Man-(1-&gt;6)]-alpha-D-Man-(1-&gt;6)]-beta-D-Man-(1-&gt;4)-beta-D-GlcNAc-(1-&gt;4)-beta-D-GlcNAc)-L-asparaginyl-[protein] + beta-D-glucose</text>
        <dbReference type="Rhea" id="RHEA:55988"/>
        <dbReference type="Rhea" id="RHEA-COMP:12806"/>
        <dbReference type="Rhea" id="RHEA-COMP:14355"/>
        <dbReference type="ChEBI" id="CHEBI:15377"/>
        <dbReference type="ChEBI" id="CHEBI:15903"/>
        <dbReference type="ChEBI" id="CHEBI:59082"/>
        <dbReference type="ChEBI" id="CHEBI:132537"/>
        <dbReference type="EC" id="3.2.1.106"/>
    </reaction>
</comment>
<comment type="subcellular location">
    <subcellularLocation>
        <location evidence="4 5">Endoplasmic reticulum membrane</location>
        <topology evidence="4 5">Single-pass type II membrane protein</topology>
    </subcellularLocation>
</comment>
<comment type="similarity">
    <text evidence="6">Belongs to the glycosyl hydrolase 63 family.</text>
</comment>
<dbReference type="EC" id="3.2.1.106"/>
<dbReference type="EMBL" id="CU329670">
    <property type="protein sequence ID" value="CAB11295.1"/>
    <property type="molecule type" value="Genomic_DNA"/>
</dbReference>
<dbReference type="EMBL" id="AB028004">
    <property type="protein sequence ID" value="BAA87308.1"/>
    <property type="molecule type" value="Genomic_DNA"/>
</dbReference>
<dbReference type="PIR" id="T39059">
    <property type="entry name" value="T39059"/>
</dbReference>
<dbReference type="SMR" id="O14255"/>
<dbReference type="BioGRID" id="278992">
    <property type="interactions" value="3"/>
</dbReference>
<dbReference type="FunCoup" id="O14255">
    <property type="interactions" value="468"/>
</dbReference>
<dbReference type="STRING" id="284812.O14255"/>
<dbReference type="CAZy" id="GH63">
    <property type="family name" value="Glycoside Hydrolase Family 63"/>
</dbReference>
<dbReference type="iPTMnet" id="O14255"/>
<dbReference type="PaxDb" id="4896-SPAC6G10.09.1"/>
<dbReference type="EnsemblFungi" id="SPAC6G10.09.1">
    <property type="protein sequence ID" value="SPAC6G10.09.1:pep"/>
    <property type="gene ID" value="SPAC6G10.09"/>
</dbReference>
<dbReference type="KEGG" id="spo:2542534"/>
<dbReference type="PomBase" id="SPAC6G10.09"/>
<dbReference type="VEuPathDB" id="FungiDB:SPAC6G10.09"/>
<dbReference type="eggNOG" id="KOG2161">
    <property type="taxonomic scope" value="Eukaryota"/>
</dbReference>
<dbReference type="HOGENOM" id="CLU_007380_1_0_1"/>
<dbReference type="InParanoid" id="O14255"/>
<dbReference type="OMA" id="FNWYNTT"/>
<dbReference type="PhylomeDB" id="O14255"/>
<dbReference type="PRO" id="PR:O14255"/>
<dbReference type="Proteomes" id="UP000002485">
    <property type="component" value="Chromosome I"/>
</dbReference>
<dbReference type="GO" id="GO:0005783">
    <property type="term" value="C:endoplasmic reticulum"/>
    <property type="evidence" value="ECO:0007005"/>
    <property type="project" value="PomBase"/>
</dbReference>
<dbReference type="GO" id="GO:0005789">
    <property type="term" value="C:endoplasmic reticulum membrane"/>
    <property type="evidence" value="ECO:0000318"/>
    <property type="project" value="GO_Central"/>
</dbReference>
<dbReference type="GO" id="GO:0098553">
    <property type="term" value="C:lumenal side of endoplasmic reticulum membrane"/>
    <property type="evidence" value="ECO:0000314"/>
    <property type="project" value="PomBase"/>
</dbReference>
<dbReference type="GO" id="GO:0004573">
    <property type="term" value="F:Glc3Man9GlcNAc2 oligosaccharide glucosidase activity"/>
    <property type="evidence" value="ECO:0000315"/>
    <property type="project" value="PomBase"/>
</dbReference>
<dbReference type="GO" id="GO:0006488">
    <property type="term" value="P:dolichol-linked oligosaccharide biosynthetic process"/>
    <property type="evidence" value="ECO:0000315"/>
    <property type="project" value="PomBase"/>
</dbReference>
<dbReference type="GO" id="GO:0009311">
    <property type="term" value="P:oligosaccharide metabolic process"/>
    <property type="evidence" value="ECO:0007669"/>
    <property type="project" value="InterPro"/>
</dbReference>
<dbReference type="GO" id="GO:0006487">
    <property type="term" value="P:protein N-linked glycosylation"/>
    <property type="evidence" value="ECO:0000318"/>
    <property type="project" value="GO_Central"/>
</dbReference>
<dbReference type="FunFam" id="1.50.10.10:FF:000027">
    <property type="entry name" value="Probable mannosyl-oligosaccharide glucosidase"/>
    <property type="match status" value="1"/>
</dbReference>
<dbReference type="Gene3D" id="1.50.10.10">
    <property type="match status" value="1"/>
</dbReference>
<dbReference type="Gene3D" id="2.70.98.110">
    <property type="entry name" value="Glycosyl hydrolase family 63, N-terminal domain"/>
    <property type="match status" value="1"/>
</dbReference>
<dbReference type="InterPro" id="IPR008928">
    <property type="entry name" value="6-hairpin_glycosidase_sf"/>
</dbReference>
<dbReference type="InterPro" id="IPR012341">
    <property type="entry name" value="6hp_glycosidase-like_sf"/>
</dbReference>
<dbReference type="InterPro" id="IPR031335">
    <property type="entry name" value="Glyco_hydro_63_C"/>
</dbReference>
<dbReference type="InterPro" id="IPR031631">
    <property type="entry name" value="Glyco_hydro_63N"/>
</dbReference>
<dbReference type="InterPro" id="IPR038518">
    <property type="entry name" value="Glyco_hydro_63N_sf"/>
</dbReference>
<dbReference type="InterPro" id="IPR004888">
    <property type="entry name" value="Glycoside_hydrolase_63"/>
</dbReference>
<dbReference type="PANTHER" id="PTHR10412">
    <property type="entry name" value="MANNOSYL-OLIGOSACCHARIDE GLUCOSIDASE"/>
    <property type="match status" value="1"/>
</dbReference>
<dbReference type="PANTHER" id="PTHR10412:SF11">
    <property type="entry name" value="MANNOSYL-OLIGOSACCHARIDE GLUCOSIDASE"/>
    <property type="match status" value="1"/>
</dbReference>
<dbReference type="Pfam" id="PF03200">
    <property type="entry name" value="Glyco_hydro_63"/>
    <property type="match status" value="1"/>
</dbReference>
<dbReference type="Pfam" id="PF16923">
    <property type="entry name" value="Glyco_hydro_63N"/>
    <property type="match status" value="1"/>
</dbReference>
<dbReference type="SUPFAM" id="SSF48208">
    <property type="entry name" value="Six-hairpin glycosidases"/>
    <property type="match status" value="1"/>
</dbReference>